<dbReference type="EC" id="4.2.1.33" evidence="1"/>
<dbReference type="EMBL" id="FM209186">
    <property type="protein sequence ID" value="CAW26666.1"/>
    <property type="molecule type" value="Genomic_DNA"/>
</dbReference>
<dbReference type="RefSeq" id="WP_003091399.1">
    <property type="nucleotide sequence ID" value="NC_011770.1"/>
</dbReference>
<dbReference type="SMR" id="B7VBP9"/>
<dbReference type="KEGG" id="pag:PLES_19381"/>
<dbReference type="HOGENOM" id="CLU_006714_3_4_6"/>
<dbReference type="UniPathway" id="UPA00048">
    <property type="reaction ID" value="UER00071"/>
</dbReference>
<dbReference type="GO" id="GO:0003861">
    <property type="term" value="F:3-isopropylmalate dehydratase activity"/>
    <property type="evidence" value="ECO:0007669"/>
    <property type="project" value="UniProtKB-UniRule"/>
</dbReference>
<dbReference type="GO" id="GO:0051539">
    <property type="term" value="F:4 iron, 4 sulfur cluster binding"/>
    <property type="evidence" value="ECO:0007669"/>
    <property type="project" value="UniProtKB-KW"/>
</dbReference>
<dbReference type="GO" id="GO:0046872">
    <property type="term" value="F:metal ion binding"/>
    <property type="evidence" value="ECO:0007669"/>
    <property type="project" value="UniProtKB-KW"/>
</dbReference>
<dbReference type="GO" id="GO:0009098">
    <property type="term" value="P:L-leucine biosynthetic process"/>
    <property type="evidence" value="ECO:0007669"/>
    <property type="project" value="UniProtKB-UniRule"/>
</dbReference>
<dbReference type="CDD" id="cd01583">
    <property type="entry name" value="IPMI"/>
    <property type="match status" value="1"/>
</dbReference>
<dbReference type="FunFam" id="3.30.499.10:FF:000007">
    <property type="entry name" value="3-isopropylmalate dehydratase large subunit"/>
    <property type="match status" value="1"/>
</dbReference>
<dbReference type="Gene3D" id="3.30.499.10">
    <property type="entry name" value="Aconitase, domain 3"/>
    <property type="match status" value="2"/>
</dbReference>
<dbReference type="HAMAP" id="MF_01026">
    <property type="entry name" value="LeuC_type1"/>
    <property type="match status" value="1"/>
</dbReference>
<dbReference type="InterPro" id="IPR004430">
    <property type="entry name" value="3-IsopropMal_deHydase_lsu"/>
</dbReference>
<dbReference type="InterPro" id="IPR015931">
    <property type="entry name" value="Acnase/IPM_dHydase_lsu_aba_1/3"/>
</dbReference>
<dbReference type="InterPro" id="IPR001030">
    <property type="entry name" value="Acoase/IPM_deHydtase_lsu_aba"/>
</dbReference>
<dbReference type="InterPro" id="IPR018136">
    <property type="entry name" value="Aconitase_4Fe-4S_BS"/>
</dbReference>
<dbReference type="InterPro" id="IPR036008">
    <property type="entry name" value="Aconitase_4Fe-4S_dom"/>
</dbReference>
<dbReference type="InterPro" id="IPR050067">
    <property type="entry name" value="IPM_dehydratase_rel_enz"/>
</dbReference>
<dbReference type="InterPro" id="IPR033941">
    <property type="entry name" value="IPMI_cat"/>
</dbReference>
<dbReference type="NCBIfam" id="TIGR00170">
    <property type="entry name" value="leuC"/>
    <property type="match status" value="1"/>
</dbReference>
<dbReference type="NCBIfam" id="NF004016">
    <property type="entry name" value="PRK05478.1"/>
    <property type="match status" value="1"/>
</dbReference>
<dbReference type="NCBIfam" id="NF009116">
    <property type="entry name" value="PRK12466.1"/>
    <property type="match status" value="1"/>
</dbReference>
<dbReference type="PANTHER" id="PTHR43822:SF9">
    <property type="entry name" value="3-ISOPROPYLMALATE DEHYDRATASE"/>
    <property type="match status" value="1"/>
</dbReference>
<dbReference type="PANTHER" id="PTHR43822">
    <property type="entry name" value="HOMOACONITASE, MITOCHONDRIAL-RELATED"/>
    <property type="match status" value="1"/>
</dbReference>
<dbReference type="Pfam" id="PF00330">
    <property type="entry name" value="Aconitase"/>
    <property type="match status" value="1"/>
</dbReference>
<dbReference type="PRINTS" id="PR00415">
    <property type="entry name" value="ACONITASE"/>
</dbReference>
<dbReference type="SUPFAM" id="SSF53732">
    <property type="entry name" value="Aconitase iron-sulfur domain"/>
    <property type="match status" value="1"/>
</dbReference>
<dbReference type="PROSITE" id="PS00450">
    <property type="entry name" value="ACONITASE_1"/>
    <property type="match status" value="1"/>
</dbReference>
<dbReference type="PROSITE" id="PS01244">
    <property type="entry name" value="ACONITASE_2"/>
    <property type="match status" value="1"/>
</dbReference>
<proteinExistence type="inferred from homology"/>
<evidence type="ECO:0000255" key="1">
    <source>
        <dbReference type="HAMAP-Rule" id="MF_01026"/>
    </source>
</evidence>
<comment type="function">
    <text evidence="1">Catalyzes the isomerization between 2-isopropylmalate and 3-isopropylmalate, via the formation of 2-isopropylmaleate.</text>
</comment>
<comment type="catalytic activity">
    <reaction evidence="1">
        <text>(2R,3S)-3-isopropylmalate = (2S)-2-isopropylmalate</text>
        <dbReference type="Rhea" id="RHEA:32287"/>
        <dbReference type="ChEBI" id="CHEBI:1178"/>
        <dbReference type="ChEBI" id="CHEBI:35121"/>
        <dbReference type="EC" id="4.2.1.33"/>
    </reaction>
</comment>
<comment type="cofactor">
    <cofactor evidence="1">
        <name>[4Fe-4S] cluster</name>
        <dbReference type="ChEBI" id="CHEBI:49883"/>
    </cofactor>
    <text evidence="1">Binds 1 [4Fe-4S] cluster per subunit.</text>
</comment>
<comment type="pathway">
    <text evidence="1">Amino-acid biosynthesis; L-leucine biosynthesis; L-leucine from 3-methyl-2-oxobutanoate: step 2/4.</text>
</comment>
<comment type="subunit">
    <text evidence="1">Heterodimer of LeuC and LeuD.</text>
</comment>
<comment type="similarity">
    <text evidence="1">Belongs to the aconitase/IPM isomerase family. LeuC type 1 subfamily.</text>
</comment>
<reference key="1">
    <citation type="journal article" date="2009" name="Genome Res.">
        <title>Newly introduced genomic prophage islands are critical determinants of in vivo competitiveness in the Liverpool epidemic strain of Pseudomonas aeruginosa.</title>
        <authorList>
            <person name="Winstanley C."/>
            <person name="Langille M.G.I."/>
            <person name="Fothergill J.L."/>
            <person name="Kukavica-Ibrulj I."/>
            <person name="Paradis-Bleau C."/>
            <person name="Sanschagrin F."/>
            <person name="Thomson N.R."/>
            <person name="Winsor G.L."/>
            <person name="Quail M.A."/>
            <person name="Lennard N."/>
            <person name="Bignell A."/>
            <person name="Clarke L."/>
            <person name="Seeger K."/>
            <person name="Saunders D."/>
            <person name="Harris D."/>
            <person name="Parkhill J."/>
            <person name="Hancock R.E.W."/>
            <person name="Brinkman F.S.L."/>
            <person name="Levesque R.C."/>
        </authorList>
    </citation>
    <scope>NUCLEOTIDE SEQUENCE [LARGE SCALE GENOMIC DNA]</scope>
    <source>
        <strain>LESB58</strain>
    </source>
</reference>
<name>LEUC_PSEA8</name>
<gene>
    <name evidence="1" type="primary">leuC</name>
    <name type="ordered locus">PLES_19381</name>
</gene>
<organism>
    <name type="scientific">Pseudomonas aeruginosa (strain LESB58)</name>
    <dbReference type="NCBI Taxonomy" id="557722"/>
    <lineage>
        <taxon>Bacteria</taxon>
        <taxon>Pseudomonadati</taxon>
        <taxon>Pseudomonadota</taxon>
        <taxon>Gammaproteobacteria</taxon>
        <taxon>Pseudomonadales</taxon>
        <taxon>Pseudomonadaceae</taxon>
        <taxon>Pseudomonas</taxon>
    </lineage>
</organism>
<keyword id="KW-0004">4Fe-4S</keyword>
<keyword id="KW-0028">Amino-acid biosynthesis</keyword>
<keyword id="KW-0100">Branched-chain amino acid biosynthesis</keyword>
<keyword id="KW-0408">Iron</keyword>
<keyword id="KW-0411">Iron-sulfur</keyword>
<keyword id="KW-0432">Leucine biosynthesis</keyword>
<keyword id="KW-0456">Lyase</keyword>
<keyword id="KW-0479">Metal-binding</keyword>
<accession>B7VBP9</accession>
<feature type="chain" id="PRO_1000135705" description="3-isopropylmalate dehydratase large subunit">
    <location>
        <begin position="1"/>
        <end position="474"/>
    </location>
</feature>
<feature type="binding site" evidence="1">
    <location>
        <position position="353"/>
    </location>
    <ligand>
        <name>[4Fe-4S] cluster</name>
        <dbReference type="ChEBI" id="CHEBI:49883"/>
    </ligand>
</feature>
<feature type="binding site" evidence="1">
    <location>
        <position position="414"/>
    </location>
    <ligand>
        <name>[4Fe-4S] cluster</name>
        <dbReference type="ChEBI" id="CHEBI:49883"/>
    </ligand>
</feature>
<feature type="binding site" evidence="1">
    <location>
        <position position="417"/>
    </location>
    <ligand>
        <name>[4Fe-4S] cluster</name>
        <dbReference type="ChEBI" id="CHEBI:49883"/>
    </ligand>
</feature>
<sequence length="474" mass="51042">MAGKTLYDKLWDMHLVKQRDDGSALIYIDRHILHEVTSPQAFEGLRLAGRKPWRIDANIATPDHNVPTTRTERKGGIAAIADEVSRLQVQTLDENCDDFGITEFKMNDVRQGIVHVVGPEQGATLPGMTVVCGDSHTSTHGAFGALAHGIGTSEVEHVLATQCLVAKKMKNMLVKVEGRLPAGVTAKDIVLAVIGRIGTAGGNGHAIEFAGSAIRDLSIEGRMTICNMSIEAGARVGLVAVDQKTIDYVKGRPFAPSAEQWDQAVACWQGLVSDADARFDTVVELDAAQIKPQVSWGTSPEMVLAVDQNVPDPARESDPIKRGSIERALKYMGLRPNQAITDIQLDRVFIGSCTNSRIEDLRAAAEVARGRKVAATIKQALVVPGSGLVKEQAEKEGLDRIFIEAGFEWREPGCSMCLAMNPDRLESGEHCASTSNRNFEGRQGAGGRTHLVSPAMAAAAAVNGRFIDVRELLA</sequence>
<protein>
    <recommendedName>
        <fullName evidence="1">3-isopropylmalate dehydratase large subunit</fullName>
        <ecNumber evidence="1">4.2.1.33</ecNumber>
    </recommendedName>
    <alternativeName>
        <fullName evidence="1">Alpha-IPM isomerase</fullName>
        <shortName evidence="1">IPMI</shortName>
    </alternativeName>
    <alternativeName>
        <fullName evidence="1">Isopropylmalate isomerase</fullName>
    </alternativeName>
</protein>